<name>BBE21_ARATH</name>
<sequence length="539" mass="60144">MIATQTFVSVFFFVFFLVSLPFFSSAAPPSSDSIYESFVQCFSDKTKSPQAQITDNVFSRTNPSFSSVLRAYIRNGRFNTSSTPKPAIIVTPRSDIHVSAAVTCSKSLNFLLKIRSGGHDYEGLSYISDKPFFILDMSNLRDVSVDIADQSAWISAGATLGEVYYRIWEKSKVHGFPAGVCPTVGVGGHISGGGYGNMLRKFGLSVDNLIDAKIVDVNGQILDRKSMGEDLFWAISGGGGASFGVVLGYKVKLVPVPETVTVFRVEKYMDSGAVDMVHKWQSVGPKTDRNLFLRMLIQPVTRKKVKTVRATVVALFLGRAEEVVALLGKEFPELSLKKENCSEMTWFQSALWWDNRVNPTQIDPKVFLDRNLDRANFGKRKSDYVASEIPRDGIESLFKKMTELGKIGLVFNPYGGKMAEVTVNATPFPHRSKLFKIQYSVTWQENSVEIEKGFLNQANVLYSFMTGFVSKNPRNAYLNYRDVDIGVNDHGTNSYEEGEVYGRKYFGDNFDRLVKVKTAADPDNFFRNEQSIPTVLSKA</sequence>
<reference key="1">
    <citation type="journal article" date="1999" name="Nature">
        <title>Sequence and analysis of chromosome 4 of the plant Arabidopsis thaliana.</title>
        <authorList>
            <person name="Mayer K.F.X."/>
            <person name="Schueller C."/>
            <person name="Wambutt R."/>
            <person name="Murphy G."/>
            <person name="Volckaert G."/>
            <person name="Pohl T."/>
            <person name="Duesterhoeft A."/>
            <person name="Stiekema W."/>
            <person name="Entian K.-D."/>
            <person name="Terryn N."/>
            <person name="Harris B."/>
            <person name="Ansorge W."/>
            <person name="Brandt P."/>
            <person name="Grivell L.A."/>
            <person name="Rieger M."/>
            <person name="Weichselgartner M."/>
            <person name="de Simone V."/>
            <person name="Obermaier B."/>
            <person name="Mache R."/>
            <person name="Mueller M."/>
            <person name="Kreis M."/>
            <person name="Delseny M."/>
            <person name="Puigdomenech P."/>
            <person name="Watson M."/>
            <person name="Schmidtheini T."/>
            <person name="Reichert B."/>
            <person name="Portetelle D."/>
            <person name="Perez-Alonso M."/>
            <person name="Boutry M."/>
            <person name="Bancroft I."/>
            <person name="Vos P."/>
            <person name="Hoheisel J."/>
            <person name="Zimmermann W."/>
            <person name="Wedler H."/>
            <person name="Ridley P."/>
            <person name="Langham S.-A."/>
            <person name="McCullagh B."/>
            <person name="Bilham L."/>
            <person name="Robben J."/>
            <person name="van der Schueren J."/>
            <person name="Grymonprez B."/>
            <person name="Chuang Y.-J."/>
            <person name="Vandenbussche F."/>
            <person name="Braeken M."/>
            <person name="Weltjens I."/>
            <person name="Voet M."/>
            <person name="Bastiaens I."/>
            <person name="Aert R."/>
            <person name="Defoor E."/>
            <person name="Weitzenegger T."/>
            <person name="Bothe G."/>
            <person name="Ramsperger U."/>
            <person name="Hilbert H."/>
            <person name="Braun M."/>
            <person name="Holzer E."/>
            <person name="Brandt A."/>
            <person name="Peters S."/>
            <person name="van Staveren M."/>
            <person name="Dirkse W."/>
            <person name="Mooijman P."/>
            <person name="Klein Lankhorst R."/>
            <person name="Rose M."/>
            <person name="Hauf J."/>
            <person name="Koetter P."/>
            <person name="Berneiser S."/>
            <person name="Hempel S."/>
            <person name="Feldpausch M."/>
            <person name="Lamberth S."/>
            <person name="Van den Daele H."/>
            <person name="De Keyser A."/>
            <person name="Buysshaert C."/>
            <person name="Gielen J."/>
            <person name="Villarroel R."/>
            <person name="De Clercq R."/>
            <person name="van Montagu M."/>
            <person name="Rogers J."/>
            <person name="Cronin A."/>
            <person name="Quail M.A."/>
            <person name="Bray-Allen S."/>
            <person name="Clark L."/>
            <person name="Doggett J."/>
            <person name="Hall S."/>
            <person name="Kay M."/>
            <person name="Lennard N."/>
            <person name="McLay K."/>
            <person name="Mayes R."/>
            <person name="Pettett A."/>
            <person name="Rajandream M.A."/>
            <person name="Lyne M."/>
            <person name="Benes V."/>
            <person name="Rechmann S."/>
            <person name="Borkova D."/>
            <person name="Bloecker H."/>
            <person name="Scharfe M."/>
            <person name="Grimm M."/>
            <person name="Loehnert T.-H."/>
            <person name="Dose S."/>
            <person name="de Haan M."/>
            <person name="Maarse A.C."/>
            <person name="Schaefer M."/>
            <person name="Mueller-Auer S."/>
            <person name="Gabel C."/>
            <person name="Fuchs M."/>
            <person name="Fartmann B."/>
            <person name="Granderath K."/>
            <person name="Dauner D."/>
            <person name="Herzl A."/>
            <person name="Neumann S."/>
            <person name="Argiriou A."/>
            <person name="Vitale D."/>
            <person name="Liguori R."/>
            <person name="Piravandi E."/>
            <person name="Massenet O."/>
            <person name="Quigley F."/>
            <person name="Clabauld G."/>
            <person name="Muendlein A."/>
            <person name="Felber R."/>
            <person name="Schnabl S."/>
            <person name="Hiller R."/>
            <person name="Schmidt W."/>
            <person name="Lecharny A."/>
            <person name="Aubourg S."/>
            <person name="Chefdor F."/>
            <person name="Cooke R."/>
            <person name="Berger C."/>
            <person name="Monfort A."/>
            <person name="Casacuberta E."/>
            <person name="Gibbons T."/>
            <person name="Weber N."/>
            <person name="Vandenbol M."/>
            <person name="Bargues M."/>
            <person name="Terol J."/>
            <person name="Torres A."/>
            <person name="Perez-Perez A."/>
            <person name="Purnelle B."/>
            <person name="Bent E."/>
            <person name="Johnson S."/>
            <person name="Tacon D."/>
            <person name="Jesse T."/>
            <person name="Heijnen L."/>
            <person name="Schwarz S."/>
            <person name="Scholler P."/>
            <person name="Heber S."/>
            <person name="Francs P."/>
            <person name="Bielke C."/>
            <person name="Frishman D."/>
            <person name="Haase D."/>
            <person name="Lemcke K."/>
            <person name="Mewes H.-W."/>
            <person name="Stocker S."/>
            <person name="Zaccaria P."/>
            <person name="Bevan M."/>
            <person name="Wilson R.K."/>
            <person name="de la Bastide M."/>
            <person name="Habermann K."/>
            <person name="Parnell L."/>
            <person name="Dedhia N."/>
            <person name="Gnoj L."/>
            <person name="Schutz K."/>
            <person name="Huang E."/>
            <person name="Spiegel L."/>
            <person name="Sekhon M."/>
            <person name="Murray J."/>
            <person name="Sheet P."/>
            <person name="Cordes M."/>
            <person name="Abu-Threideh J."/>
            <person name="Stoneking T."/>
            <person name="Kalicki J."/>
            <person name="Graves T."/>
            <person name="Harmon G."/>
            <person name="Edwards J."/>
            <person name="Latreille P."/>
            <person name="Courtney L."/>
            <person name="Cloud J."/>
            <person name="Abbott A."/>
            <person name="Scott K."/>
            <person name="Johnson D."/>
            <person name="Minx P."/>
            <person name="Bentley D."/>
            <person name="Fulton B."/>
            <person name="Miller N."/>
            <person name="Greco T."/>
            <person name="Kemp K."/>
            <person name="Kramer J."/>
            <person name="Fulton L."/>
            <person name="Mardis E."/>
            <person name="Dante M."/>
            <person name="Pepin K."/>
            <person name="Hillier L.W."/>
            <person name="Nelson J."/>
            <person name="Spieth J."/>
            <person name="Ryan E."/>
            <person name="Andrews S."/>
            <person name="Geisel C."/>
            <person name="Layman D."/>
            <person name="Du H."/>
            <person name="Ali J."/>
            <person name="Berghoff A."/>
            <person name="Jones K."/>
            <person name="Drone K."/>
            <person name="Cotton M."/>
            <person name="Joshu C."/>
            <person name="Antonoiu B."/>
            <person name="Zidanic M."/>
            <person name="Strong C."/>
            <person name="Sun H."/>
            <person name="Lamar B."/>
            <person name="Yordan C."/>
            <person name="Ma P."/>
            <person name="Zhong J."/>
            <person name="Preston R."/>
            <person name="Vil D."/>
            <person name="Shekher M."/>
            <person name="Matero A."/>
            <person name="Shah R."/>
            <person name="Swaby I.K."/>
            <person name="O'Shaughnessy A."/>
            <person name="Rodriguez M."/>
            <person name="Hoffman J."/>
            <person name="Till S."/>
            <person name="Granat S."/>
            <person name="Shohdy N."/>
            <person name="Hasegawa A."/>
            <person name="Hameed A."/>
            <person name="Lodhi M."/>
            <person name="Johnson A."/>
            <person name="Chen E."/>
            <person name="Marra M.A."/>
            <person name="Martienssen R."/>
            <person name="McCombie W.R."/>
        </authorList>
    </citation>
    <scope>NUCLEOTIDE SEQUENCE [LARGE SCALE GENOMIC DNA]</scope>
    <source>
        <strain>cv. Columbia</strain>
    </source>
</reference>
<reference key="2">
    <citation type="journal article" date="2017" name="Plant J.">
        <title>Araport11: a complete reannotation of the Arabidopsis thaliana reference genome.</title>
        <authorList>
            <person name="Cheng C.Y."/>
            <person name="Krishnakumar V."/>
            <person name="Chan A.P."/>
            <person name="Thibaud-Nissen F."/>
            <person name="Schobel S."/>
            <person name="Town C.D."/>
        </authorList>
    </citation>
    <scope>GENOME REANNOTATION</scope>
    <source>
        <strain>cv. Columbia</strain>
    </source>
</reference>
<reference key="3">
    <citation type="journal article" date="2009" name="DNA Res.">
        <title>Analysis of multiple occurrences of alternative splicing events in Arabidopsis thaliana using novel sequenced full-length cDNAs.</title>
        <authorList>
            <person name="Iida K."/>
            <person name="Fukami-Kobayashi K."/>
            <person name="Toyoda A."/>
            <person name="Sakaki Y."/>
            <person name="Kobayashi M."/>
            <person name="Seki M."/>
            <person name="Shinozaki K."/>
        </authorList>
    </citation>
    <scope>NUCLEOTIDE SEQUENCE [LARGE SCALE MRNA]</scope>
    <source>
        <strain>cv. Columbia</strain>
        <tissue>Root</tissue>
    </source>
</reference>
<reference key="4">
    <citation type="journal article" date="2015" name="J. Biol. Chem.">
        <title>Oxidation of monolignols by members of the berberine bridge enzyme family suggests a role in plant cell wall metabolism.</title>
        <authorList>
            <person name="Daniel B."/>
            <person name="Pavkov-Keller T."/>
            <person name="Steiner B."/>
            <person name="Dordic A."/>
            <person name="Gutmann A."/>
            <person name="Nidetzky B."/>
            <person name="Sensen C.W."/>
            <person name="van der Graaff E."/>
            <person name="Wallner S."/>
            <person name="Gruber K."/>
            <person name="Macheroux P."/>
        </authorList>
    </citation>
    <scope>GENE FAMILY</scope>
    <scope>NOMENCLATURE</scope>
</reference>
<gene>
    <name evidence="7" type="ordered locus">At4g20840</name>
    <name evidence="8" type="ORF">F21C20.190</name>
</gene>
<evidence type="ECO:0000250" key="1">
    <source>
        <dbReference type="UniProtKB" id="O64743"/>
    </source>
</evidence>
<evidence type="ECO:0000255" key="2"/>
<evidence type="ECO:0000255" key="3">
    <source>
        <dbReference type="PROSITE-ProRule" id="PRU00498"/>
    </source>
</evidence>
<evidence type="ECO:0000255" key="4">
    <source>
        <dbReference type="PROSITE-ProRule" id="PRU00718"/>
    </source>
</evidence>
<evidence type="ECO:0000303" key="5">
    <source>
    </source>
</evidence>
<evidence type="ECO:0000305" key="6"/>
<evidence type="ECO:0000312" key="7">
    <source>
        <dbReference type="Araport" id="AT4G20840"/>
    </source>
</evidence>
<evidence type="ECO:0000312" key="8">
    <source>
        <dbReference type="EMBL" id="CAB45850.1"/>
    </source>
</evidence>
<proteinExistence type="evidence at transcript level"/>
<accession>Q9SVG3</accession>
<protein>
    <recommendedName>
        <fullName evidence="5">Berberine bridge enzyme-like 21</fullName>
        <shortName evidence="5">AtBBE-like 21</shortName>
        <ecNumber evidence="1">1.1.1.-</ecNumber>
    </recommendedName>
</protein>
<feature type="signal peptide" evidence="2">
    <location>
        <begin position="1"/>
        <end position="26"/>
    </location>
</feature>
<feature type="chain" id="PRO_5008180483" description="Berberine bridge enzyme-like 21">
    <location>
        <begin position="27"/>
        <end position="539"/>
    </location>
</feature>
<feature type="domain" description="FAD-binding PCMH-type" evidence="4">
    <location>
        <begin position="82"/>
        <end position="256"/>
    </location>
</feature>
<feature type="glycosylation site" description="N-linked (GlcNAc...) asparagine" evidence="3">
    <location>
        <position position="79"/>
    </location>
</feature>
<feature type="glycosylation site" description="N-linked (GlcNAc...) asparagine" evidence="3">
    <location>
        <position position="340"/>
    </location>
</feature>
<feature type="disulfide bond" evidence="1">
    <location>
        <begin position="41"/>
        <end position="104"/>
    </location>
</feature>
<feature type="cross-link" description="6-(S-cysteinyl)-8alpha-(pros-histidyl)-FAD (His-Cys)" evidence="1">
    <location>
        <begin position="119"/>
        <end position="181"/>
    </location>
</feature>
<dbReference type="EC" id="1.1.1.-" evidence="1"/>
<dbReference type="EMBL" id="AL080254">
    <property type="protein sequence ID" value="CAB45850.1"/>
    <property type="molecule type" value="Genomic_DNA"/>
</dbReference>
<dbReference type="EMBL" id="AL161553">
    <property type="protein sequence ID" value="CAB79084.1"/>
    <property type="molecule type" value="Genomic_DNA"/>
</dbReference>
<dbReference type="EMBL" id="CP002687">
    <property type="protein sequence ID" value="AEE84367.1"/>
    <property type="molecule type" value="Genomic_DNA"/>
</dbReference>
<dbReference type="EMBL" id="AK317639">
    <property type="protein sequence ID" value="BAH20300.1"/>
    <property type="molecule type" value="mRNA"/>
</dbReference>
<dbReference type="PIR" id="T10626">
    <property type="entry name" value="T10626"/>
</dbReference>
<dbReference type="RefSeq" id="NP_193816.1">
    <property type="nucleotide sequence ID" value="NM_118202.2"/>
</dbReference>
<dbReference type="SMR" id="Q9SVG3"/>
<dbReference type="FunCoup" id="Q9SVG3">
    <property type="interactions" value="29"/>
</dbReference>
<dbReference type="STRING" id="3702.Q9SVG3"/>
<dbReference type="GlyGen" id="Q9SVG3">
    <property type="glycosylation" value="3 sites"/>
</dbReference>
<dbReference type="PaxDb" id="3702-AT4G20840.1"/>
<dbReference type="ProteomicsDB" id="240742"/>
<dbReference type="EnsemblPlants" id="AT4G20840.1">
    <property type="protein sequence ID" value="AT4G20840.1"/>
    <property type="gene ID" value="AT4G20840"/>
</dbReference>
<dbReference type="GeneID" id="827832"/>
<dbReference type="Gramene" id="AT4G20840.1">
    <property type="protein sequence ID" value="AT4G20840.1"/>
    <property type="gene ID" value="AT4G20840"/>
</dbReference>
<dbReference type="KEGG" id="ath:AT4G20840"/>
<dbReference type="Araport" id="AT4G20840"/>
<dbReference type="TAIR" id="AT4G20840">
    <property type="gene designation" value="ATBBE21"/>
</dbReference>
<dbReference type="eggNOG" id="ENOG502QVGN">
    <property type="taxonomic scope" value="Eukaryota"/>
</dbReference>
<dbReference type="HOGENOM" id="CLU_018354_6_0_1"/>
<dbReference type="InParanoid" id="Q9SVG3"/>
<dbReference type="OMA" id="ATVYQNF"/>
<dbReference type="PhylomeDB" id="Q9SVG3"/>
<dbReference type="BioCyc" id="ARA:AT4G20840-MONOMER"/>
<dbReference type="PRO" id="PR:Q9SVG3"/>
<dbReference type="Proteomes" id="UP000006548">
    <property type="component" value="Chromosome 4"/>
</dbReference>
<dbReference type="ExpressionAtlas" id="Q9SVG3">
    <property type="expression patterns" value="baseline and differential"/>
</dbReference>
<dbReference type="GO" id="GO:0048046">
    <property type="term" value="C:apoplast"/>
    <property type="evidence" value="ECO:0007005"/>
    <property type="project" value="TAIR"/>
</dbReference>
<dbReference type="GO" id="GO:0005829">
    <property type="term" value="C:cytosol"/>
    <property type="evidence" value="ECO:0007005"/>
    <property type="project" value="TAIR"/>
</dbReference>
<dbReference type="GO" id="GO:0009505">
    <property type="term" value="C:plant-type cell wall"/>
    <property type="evidence" value="ECO:0000250"/>
    <property type="project" value="UniProtKB"/>
</dbReference>
<dbReference type="GO" id="GO:0005886">
    <property type="term" value="C:plasma membrane"/>
    <property type="evidence" value="ECO:0007005"/>
    <property type="project" value="TAIR"/>
</dbReference>
<dbReference type="GO" id="GO:0071949">
    <property type="term" value="F:FAD binding"/>
    <property type="evidence" value="ECO:0007669"/>
    <property type="project" value="InterPro"/>
</dbReference>
<dbReference type="GO" id="GO:0016899">
    <property type="term" value="F:oxidoreductase activity, acting on the CH-OH group of donors, oxygen as acceptor"/>
    <property type="evidence" value="ECO:0000314"/>
    <property type="project" value="TAIR"/>
</dbReference>
<dbReference type="FunFam" id="3.30.43.10:FF:000004">
    <property type="entry name" value="Berberine bridge enzyme-like 15"/>
    <property type="match status" value="1"/>
</dbReference>
<dbReference type="Gene3D" id="3.30.465.10">
    <property type="match status" value="1"/>
</dbReference>
<dbReference type="Gene3D" id="3.40.462.20">
    <property type="match status" value="1"/>
</dbReference>
<dbReference type="Gene3D" id="3.30.43.10">
    <property type="entry name" value="Uridine Diphospho-n-acetylenolpyruvylglucosamine Reductase, domain 2"/>
    <property type="match status" value="1"/>
</dbReference>
<dbReference type="InterPro" id="IPR012951">
    <property type="entry name" value="BBE"/>
</dbReference>
<dbReference type="InterPro" id="IPR016166">
    <property type="entry name" value="FAD-bd_PCMH"/>
</dbReference>
<dbReference type="InterPro" id="IPR036318">
    <property type="entry name" value="FAD-bd_PCMH-like_sf"/>
</dbReference>
<dbReference type="InterPro" id="IPR016167">
    <property type="entry name" value="FAD-bd_PCMH_sub1"/>
</dbReference>
<dbReference type="InterPro" id="IPR016169">
    <property type="entry name" value="FAD-bd_PCMH_sub2"/>
</dbReference>
<dbReference type="InterPro" id="IPR006094">
    <property type="entry name" value="Oxid_FAD_bind_N"/>
</dbReference>
<dbReference type="PANTHER" id="PTHR32448">
    <property type="entry name" value="OS08G0158400 PROTEIN"/>
    <property type="match status" value="1"/>
</dbReference>
<dbReference type="Pfam" id="PF08031">
    <property type="entry name" value="BBE"/>
    <property type="match status" value="1"/>
</dbReference>
<dbReference type="Pfam" id="PF01565">
    <property type="entry name" value="FAD_binding_4"/>
    <property type="match status" value="1"/>
</dbReference>
<dbReference type="SUPFAM" id="SSF56176">
    <property type="entry name" value="FAD-binding/transporter-associated domain-like"/>
    <property type="match status" value="1"/>
</dbReference>
<dbReference type="PROSITE" id="PS51387">
    <property type="entry name" value="FAD_PCMH"/>
    <property type="match status" value="1"/>
</dbReference>
<comment type="cofactor">
    <cofactor evidence="1">
        <name>FAD</name>
        <dbReference type="ChEBI" id="CHEBI:57692"/>
    </cofactor>
    <text evidence="1">Binds 1 FAD per subunit in a bicovalent manner.</text>
</comment>
<comment type="subcellular location">
    <subcellularLocation>
        <location evidence="1">Secreted</location>
        <location evidence="1">Cell wall</location>
    </subcellularLocation>
</comment>
<comment type="PTM">
    <text evidence="1">The FAD cofactor is bound via a bicovalent 6-S-cysteinyl, 8alpha-N1-histidyl FAD linkage.</text>
</comment>
<comment type="similarity">
    <text evidence="6">Belongs to the oxygen-dependent FAD-linked oxidoreductase family.</text>
</comment>
<organism>
    <name type="scientific">Arabidopsis thaliana</name>
    <name type="common">Mouse-ear cress</name>
    <dbReference type="NCBI Taxonomy" id="3702"/>
    <lineage>
        <taxon>Eukaryota</taxon>
        <taxon>Viridiplantae</taxon>
        <taxon>Streptophyta</taxon>
        <taxon>Embryophyta</taxon>
        <taxon>Tracheophyta</taxon>
        <taxon>Spermatophyta</taxon>
        <taxon>Magnoliopsida</taxon>
        <taxon>eudicotyledons</taxon>
        <taxon>Gunneridae</taxon>
        <taxon>Pentapetalae</taxon>
        <taxon>rosids</taxon>
        <taxon>malvids</taxon>
        <taxon>Brassicales</taxon>
        <taxon>Brassicaceae</taxon>
        <taxon>Camelineae</taxon>
        <taxon>Arabidopsis</taxon>
    </lineage>
</organism>
<keyword id="KW-0134">Cell wall</keyword>
<keyword id="KW-1015">Disulfide bond</keyword>
<keyword id="KW-0274">FAD</keyword>
<keyword id="KW-0285">Flavoprotein</keyword>
<keyword id="KW-0325">Glycoprotein</keyword>
<keyword id="KW-0547">Nucleotide-binding</keyword>
<keyword id="KW-0560">Oxidoreductase</keyword>
<keyword id="KW-1185">Reference proteome</keyword>
<keyword id="KW-0964">Secreted</keyword>
<keyword id="KW-0732">Signal</keyword>